<evidence type="ECO:0000250" key="1"/>
<evidence type="ECO:0000250" key="2">
    <source>
        <dbReference type="UniProtKB" id="Q15784"/>
    </source>
</evidence>
<evidence type="ECO:0000255" key="3"/>
<evidence type="ECO:0000255" key="4">
    <source>
        <dbReference type="PROSITE-ProRule" id="PRU00981"/>
    </source>
</evidence>
<evidence type="ECO:0000256" key="5">
    <source>
        <dbReference type="SAM" id="MobiDB-lite"/>
    </source>
</evidence>
<evidence type="ECO:0000269" key="6">
    <source>
    </source>
</evidence>
<evidence type="ECO:0000305" key="7"/>
<evidence type="ECO:0000312" key="8">
    <source>
        <dbReference type="EMBL" id="AAD23443.1"/>
    </source>
</evidence>
<evidence type="ECO:0000312" key="9">
    <source>
        <dbReference type="ZFIN" id="ZDB-GENE-010608-3"/>
    </source>
</evidence>
<keyword id="KW-0010">Activator</keyword>
<keyword id="KW-0217">Developmental protein</keyword>
<keyword id="KW-0221">Differentiation</keyword>
<keyword id="KW-0238">DNA-binding</keyword>
<keyword id="KW-0524">Neurogenesis</keyword>
<keyword id="KW-0539">Nucleus</keyword>
<keyword id="KW-1185">Reference proteome</keyword>
<keyword id="KW-0804">Transcription</keyword>
<keyword id="KW-0805">Transcription regulation</keyword>
<reference evidence="7 8" key="1">
    <citation type="journal article" date="1999" name="DNA Cell Biol.">
        <title>A class of neuroD-related basic helix-loop-helix transcription factors expressed in developing central nervous system in zebrafish.</title>
        <authorList>
            <person name="Liao J."/>
            <person name="He J."/>
            <person name="Yan T."/>
            <person name="Korzh V."/>
            <person name="Gong Z."/>
        </authorList>
    </citation>
    <scope>NUCLEOTIDE SEQUENCE [MRNA]</scope>
    <scope>DEVELOPMENTAL STAGE</scope>
    <scope>TISSUE SPECIFICITY</scope>
    <source>
        <tissue evidence="6">Embryo</tissue>
    </source>
</reference>
<dbReference type="EMBL" id="AF115774">
    <property type="protein sequence ID" value="AAD23443.1"/>
    <property type="molecule type" value="mRNA"/>
</dbReference>
<dbReference type="RefSeq" id="NP_571157.1">
    <property type="nucleotide sequence ID" value="NM_131082.1"/>
</dbReference>
<dbReference type="SMR" id="Q9W6C8"/>
<dbReference type="FunCoup" id="Q9W6C8">
    <property type="interactions" value="601"/>
</dbReference>
<dbReference type="STRING" id="7955.ENSDARP00000023642"/>
<dbReference type="PaxDb" id="7955-ENSDARP00000023642"/>
<dbReference type="GeneID" id="114435"/>
<dbReference type="KEGG" id="dre:114435"/>
<dbReference type="AGR" id="ZFIN:ZDB-GENE-010608-3"/>
<dbReference type="CTD" id="4761"/>
<dbReference type="ZFIN" id="ZDB-GENE-010608-3">
    <property type="gene designation" value="neurod2"/>
</dbReference>
<dbReference type="eggNOG" id="KOG3898">
    <property type="taxonomic scope" value="Eukaryota"/>
</dbReference>
<dbReference type="InParanoid" id="Q9W6C8"/>
<dbReference type="OrthoDB" id="10039134at2759"/>
<dbReference type="PhylomeDB" id="Q9W6C8"/>
<dbReference type="PRO" id="PR:Q9W6C8"/>
<dbReference type="Proteomes" id="UP000000437">
    <property type="component" value="Chromosome 12"/>
</dbReference>
<dbReference type="GO" id="GO:0005634">
    <property type="term" value="C:nucleus"/>
    <property type="evidence" value="ECO:0000318"/>
    <property type="project" value="GO_Central"/>
</dbReference>
<dbReference type="GO" id="GO:0000981">
    <property type="term" value="F:DNA-binding transcription factor activity, RNA polymerase II-specific"/>
    <property type="evidence" value="ECO:0000318"/>
    <property type="project" value="GO_Central"/>
</dbReference>
<dbReference type="GO" id="GO:0070888">
    <property type="term" value="F:E-box binding"/>
    <property type="evidence" value="ECO:0000318"/>
    <property type="project" value="GO_Central"/>
</dbReference>
<dbReference type="GO" id="GO:0046983">
    <property type="term" value="F:protein dimerization activity"/>
    <property type="evidence" value="ECO:0007669"/>
    <property type="project" value="InterPro"/>
</dbReference>
<dbReference type="GO" id="GO:0061564">
    <property type="term" value="P:axon development"/>
    <property type="evidence" value="ECO:0000318"/>
    <property type="project" value="GO_Central"/>
</dbReference>
<dbReference type="GO" id="GO:0045944">
    <property type="term" value="P:positive regulation of transcription by RNA polymerase II"/>
    <property type="evidence" value="ECO:0000318"/>
    <property type="project" value="GO_Central"/>
</dbReference>
<dbReference type="GO" id="GO:0007423">
    <property type="term" value="P:sensory organ development"/>
    <property type="evidence" value="ECO:0000318"/>
    <property type="project" value="GO_Central"/>
</dbReference>
<dbReference type="FunFam" id="4.10.280.10:FF:000006">
    <property type="entry name" value="Neurogenic differentiation factor"/>
    <property type="match status" value="1"/>
</dbReference>
<dbReference type="Gene3D" id="4.10.280.10">
    <property type="entry name" value="Helix-loop-helix DNA-binding domain"/>
    <property type="match status" value="1"/>
</dbReference>
<dbReference type="InterPro" id="IPR011598">
    <property type="entry name" value="bHLH_dom"/>
</dbReference>
<dbReference type="InterPro" id="IPR050359">
    <property type="entry name" value="bHLH_transcription_factors"/>
</dbReference>
<dbReference type="InterPro" id="IPR036638">
    <property type="entry name" value="HLH_DNA-bd_sf"/>
</dbReference>
<dbReference type="InterPro" id="IPR022575">
    <property type="entry name" value="NeuroD_DUF"/>
</dbReference>
<dbReference type="InterPro" id="IPR016637">
    <property type="entry name" value="TF_bHLH_NeuroD"/>
</dbReference>
<dbReference type="PANTHER" id="PTHR19290">
    <property type="entry name" value="BASIC HELIX-LOOP-HELIX PROTEIN NEUROGENIN-RELATED"/>
    <property type="match status" value="1"/>
</dbReference>
<dbReference type="PANTHER" id="PTHR19290:SF83">
    <property type="entry name" value="NEUROGENIC DIFFERENTIATION FACTOR 2"/>
    <property type="match status" value="1"/>
</dbReference>
<dbReference type="Pfam" id="PF00010">
    <property type="entry name" value="HLH"/>
    <property type="match status" value="1"/>
</dbReference>
<dbReference type="Pfam" id="PF12533">
    <property type="entry name" value="Neuro_bHLH"/>
    <property type="match status" value="1"/>
</dbReference>
<dbReference type="PIRSF" id="PIRSF015618">
    <property type="entry name" value="bHLH_NeuroD"/>
    <property type="match status" value="1"/>
</dbReference>
<dbReference type="SMART" id="SM00353">
    <property type="entry name" value="HLH"/>
    <property type="match status" value="1"/>
</dbReference>
<dbReference type="SUPFAM" id="SSF47459">
    <property type="entry name" value="HLH, helix-loop-helix DNA-binding domain"/>
    <property type="match status" value="1"/>
</dbReference>
<dbReference type="PROSITE" id="PS50888">
    <property type="entry name" value="BHLH"/>
    <property type="match status" value="1"/>
</dbReference>
<accession>Q9W6C8</accession>
<comment type="function">
    <text evidence="1">Transcriptional regulator. Appears to mediate neuronal differentiation (By similarity).</text>
</comment>
<comment type="subunit">
    <text evidence="2">Efficient DNA binding requires dimerization with another bHLH protein.</text>
</comment>
<comment type="subcellular location">
    <subcellularLocation>
        <location evidence="4">Nucleus</location>
    </subcellularLocation>
</comment>
<comment type="tissue specificity">
    <text evidence="6">In adult, expressed strongly in brain and more weakly in skin, muscle, eye and ovary.</text>
</comment>
<comment type="developmental stage">
    <text evidence="6">Embryonic, larval and adult stages. Expression is weak from 10 to 48 hours post-fertilization (hpf) and increases from 72 hpf.</text>
</comment>
<sequence>MLTRLFKEPSLLPDMQKFGGWVDDSGSEDSKTKDEEQERCRLGDEDLDEGSVKGGGSRAQSEIAGEEDYDEDVDEDDCGEEGDGDRPKKRGPKKRKMTPARLERSKVRRQKANARERTRMHDLNSALDNLLKVVPCYSKTQKLSKIETLRLAKNYIWALSEILRNGKRPDVVSYVQTLCKGLSQPTTNLVAGCLQLNSRNFLTEQCQEGVRFHTPTPSFSIQSYPYQCSRLSSTNCQSGSSTHSLRNHSLCSAYEALYTEGTSPEYISADFEGHHGPPVCVNGNFGVRQEEPLSPDAERGYQYSMHYTNLHGSRSSAAHGITCGPPGARSGSVHSENLPLFHDVHMHHDRTPAYEELNAFFHS</sequence>
<proteinExistence type="evidence at transcript level"/>
<gene>
    <name evidence="9" type="primary">neurod2</name>
    <name evidence="8" type="synonym">ndr2</name>
</gene>
<organism>
    <name type="scientific">Danio rerio</name>
    <name type="common">Zebrafish</name>
    <name type="synonym">Brachydanio rerio</name>
    <dbReference type="NCBI Taxonomy" id="7955"/>
    <lineage>
        <taxon>Eukaryota</taxon>
        <taxon>Metazoa</taxon>
        <taxon>Chordata</taxon>
        <taxon>Craniata</taxon>
        <taxon>Vertebrata</taxon>
        <taxon>Euteleostomi</taxon>
        <taxon>Actinopterygii</taxon>
        <taxon>Neopterygii</taxon>
        <taxon>Teleostei</taxon>
        <taxon>Ostariophysi</taxon>
        <taxon>Cypriniformes</taxon>
        <taxon>Danionidae</taxon>
        <taxon>Danioninae</taxon>
        <taxon>Danio</taxon>
    </lineage>
</organism>
<feature type="chain" id="PRO_0000274818" description="Neurogenic differentiation factor 2">
    <location>
        <begin position="1"/>
        <end position="363"/>
    </location>
</feature>
<feature type="domain" description="bHLH" evidence="4">
    <location>
        <begin position="107"/>
        <end position="159"/>
    </location>
</feature>
<feature type="region of interest" description="Disordered" evidence="5">
    <location>
        <begin position="1"/>
        <end position="116"/>
    </location>
</feature>
<feature type="short sequence motif" description="Nuclear localization signal" evidence="3">
    <location>
        <begin position="93"/>
        <end position="99"/>
    </location>
</feature>
<feature type="compositionally biased region" description="Basic and acidic residues" evidence="5">
    <location>
        <begin position="28"/>
        <end position="44"/>
    </location>
</feature>
<feature type="compositionally biased region" description="Acidic residues" evidence="5">
    <location>
        <begin position="64"/>
        <end position="83"/>
    </location>
</feature>
<feature type="compositionally biased region" description="Basic residues" evidence="5">
    <location>
        <begin position="87"/>
        <end position="98"/>
    </location>
</feature>
<name>NDF2_DANRE</name>
<protein>
    <recommendedName>
        <fullName>Neurogenic differentiation factor 2</fullName>
        <shortName>NeuroD2</shortName>
    </recommendedName>
</protein>